<evidence type="ECO:0000255" key="1">
    <source>
        <dbReference type="HAMAP-Rule" id="MF_00160"/>
    </source>
</evidence>
<proteinExistence type="inferred from homology"/>
<dbReference type="EC" id="2.6.1.52" evidence="1"/>
<dbReference type="EMBL" id="CP001657">
    <property type="protein sequence ID" value="ACT12773.1"/>
    <property type="molecule type" value="Genomic_DNA"/>
</dbReference>
<dbReference type="RefSeq" id="WP_015839985.1">
    <property type="nucleotide sequence ID" value="NC_012917.1"/>
</dbReference>
<dbReference type="SMR" id="C6DF64"/>
<dbReference type="STRING" id="561230.PC1_1732"/>
<dbReference type="KEGG" id="pct:PC1_1732"/>
<dbReference type="eggNOG" id="COG1932">
    <property type="taxonomic scope" value="Bacteria"/>
</dbReference>
<dbReference type="HOGENOM" id="CLU_034866_0_2_6"/>
<dbReference type="OrthoDB" id="9809412at2"/>
<dbReference type="UniPathway" id="UPA00135">
    <property type="reaction ID" value="UER00197"/>
</dbReference>
<dbReference type="UniPathway" id="UPA00244">
    <property type="reaction ID" value="UER00311"/>
</dbReference>
<dbReference type="Proteomes" id="UP000002736">
    <property type="component" value="Chromosome"/>
</dbReference>
<dbReference type="GO" id="GO:0005737">
    <property type="term" value="C:cytoplasm"/>
    <property type="evidence" value="ECO:0007669"/>
    <property type="project" value="UniProtKB-SubCell"/>
</dbReference>
<dbReference type="GO" id="GO:0004648">
    <property type="term" value="F:O-phospho-L-serine:2-oxoglutarate aminotransferase activity"/>
    <property type="evidence" value="ECO:0007669"/>
    <property type="project" value="UniProtKB-UniRule"/>
</dbReference>
<dbReference type="GO" id="GO:0030170">
    <property type="term" value="F:pyridoxal phosphate binding"/>
    <property type="evidence" value="ECO:0007669"/>
    <property type="project" value="UniProtKB-UniRule"/>
</dbReference>
<dbReference type="GO" id="GO:0006564">
    <property type="term" value="P:L-serine biosynthetic process"/>
    <property type="evidence" value="ECO:0007669"/>
    <property type="project" value="UniProtKB-UniRule"/>
</dbReference>
<dbReference type="GO" id="GO:0008615">
    <property type="term" value="P:pyridoxine biosynthetic process"/>
    <property type="evidence" value="ECO:0007669"/>
    <property type="project" value="UniProtKB-UniRule"/>
</dbReference>
<dbReference type="CDD" id="cd00611">
    <property type="entry name" value="PSAT_like"/>
    <property type="match status" value="1"/>
</dbReference>
<dbReference type="FunFam" id="3.40.640.10:FF:000010">
    <property type="entry name" value="Phosphoserine aminotransferase"/>
    <property type="match status" value="1"/>
</dbReference>
<dbReference type="FunFam" id="3.90.1150.10:FF:000006">
    <property type="entry name" value="Phosphoserine aminotransferase"/>
    <property type="match status" value="1"/>
</dbReference>
<dbReference type="Gene3D" id="3.90.1150.10">
    <property type="entry name" value="Aspartate Aminotransferase, domain 1"/>
    <property type="match status" value="1"/>
</dbReference>
<dbReference type="Gene3D" id="3.40.640.10">
    <property type="entry name" value="Type I PLP-dependent aspartate aminotransferase-like (Major domain)"/>
    <property type="match status" value="1"/>
</dbReference>
<dbReference type="HAMAP" id="MF_00160">
    <property type="entry name" value="SerC_aminotrans_5"/>
    <property type="match status" value="1"/>
</dbReference>
<dbReference type="InterPro" id="IPR000192">
    <property type="entry name" value="Aminotrans_V_dom"/>
</dbReference>
<dbReference type="InterPro" id="IPR020578">
    <property type="entry name" value="Aminotrans_V_PyrdxlP_BS"/>
</dbReference>
<dbReference type="InterPro" id="IPR022278">
    <property type="entry name" value="Pser_aminoTfrase"/>
</dbReference>
<dbReference type="InterPro" id="IPR015424">
    <property type="entry name" value="PyrdxlP-dep_Trfase"/>
</dbReference>
<dbReference type="InterPro" id="IPR015421">
    <property type="entry name" value="PyrdxlP-dep_Trfase_major"/>
</dbReference>
<dbReference type="InterPro" id="IPR015422">
    <property type="entry name" value="PyrdxlP-dep_Trfase_small"/>
</dbReference>
<dbReference type="NCBIfam" id="NF003764">
    <property type="entry name" value="PRK05355.1"/>
    <property type="match status" value="1"/>
</dbReference>
<dbReference type="NCBIfam" id="TIGR01364">
    <property type="entry name" value="serC_1"/>
    <property type="match status" value="1"/>
</dbReference>
<dbReference type="PANTHER" id="PTHR43247">
    <property type="entry name" value="PHOSPHOSERINE AMINOTRANSFERASE"/>
    <property type="match status" value="1"/>
</dbReference>
<dbReference type="PANTHER" id="PTHR43247:SF1">
    <property type="entry name" value="PHOSPHOSERINE AMINOTRANSFERASE"/>
    <property type="match status" value="1"/>
</dbReference>
<dbReference type="Pfam" id="PF00266">
    <property type="entry name" value="Aminotran_5"/>
    <property type="match status" value="1"/>
</dbReference>
<dbReference type="PIRSF" id="PIRSF000525">
    <property type="entry name" value="SerC"/>
    <property type="match status" value="1"/>
</dbReference>
<dbReference type="SUPFAM" id="SSF53383">
    <property type="entry name" value="PLP-dependent transferases"/>
    <property type="match status" value="1"/>
</dbReference>
<dbReference type="PROSITE" id="PS00595">
    <property type="entry name" value="AA_TRANSFER_CLASS_5"/>
    <property type="match status" value="1"/>
</dbReference>
<name>SERC_PECCP</name>
<protein>
    <recommendedName>
        <fullName evidence="1">Phosphoserine aminotransferase</fullName>
        <ecNumber evidence="1">2.6.1.52</ecNumber>
    </recommendedName>
    <alternativeName>
        <fullName evidence="1">Phosphohydroxythreonine aminotransferase</fullName>
        <shortName evidence="1">PSAT</shortName>
    </alternativeName>
</protein>
<feature type="chain" id="PRO_1000203546" description="Phosphoserine aminotransferase">
    <location>
        <begin position="1"/>
        <end position="361"/>
    </location>
</feature>
<feature type="binding site" evidence="1">
    <location>
        <position position="42"/>
    </location>
    <ligand>
        <name>L-glutamate</name>
        <dbReference type="ChEBI" id="CHEBI:29985"/>
    </ligand>
</feature>
<feature type="binding site" evidence="1">
    <location>
        <begin position="76"/>
        <end position="77"/>
    </location>
    <ligand>
        <name>pyridoxal 5'-phosphate</name>
        <dbReference type="ChEBI" id="CHEBI:597326"/>
    </ligand>
</feature>
<feature type="binding site" evidence="1">
    <location>
        <position position="102"/>
    </location>
    <ligand>
        <name>pyridoxal 5'-phosphate</name>
        <dbReference type="ChEBI" id="CHEBI:597326"/>
    </ligand>
</feature>
<feature type="binding site" evidence="1">
    <location>
        <position position="153"/>
    </location>
    <ligand>
        <name>pyridoxal 5'-phosphate</name>
        <dbReference type="ChEBI" id="CHEBI:597326"/>
    </ligand>
</feature>
<feature type="binding site" evidence="1">
    <location>
        <position position="173"/>
    </location>
    <ligand>
        <name>pyridoxal 5'-phosphate</name>
        <dbReference type="ChEBI" id="CHEBI:597326"/>
    </ligand>
</feature>
<feature type="binding site" evidence="1">
    <location>
        <position position="196"/>
    </location>
    <ligand>
        <name>pyridoxal 5'-phosphate</name>
        <dbReference type="ChEBI" id="CHEBI:597326"/>
    </ligand>
</feature>
<feature type="binding site" evidence="1">
    <location>
        <begin position="238"/>
        <end position="239"/>
    </location>
    <ligand>
        <name>pyridoxal 5'-phosphate</name>
        <dbReference type="ChEBI" id="CHEBI:597326"/>
    </ligand>
</feature>
<feature type="modified residue" description="N6-(pyridoxal phosphate)lysine" evidence="1">
    <location>
        <position position="197"/>
    </location>
</feature>
<keyword id="KW-0028">Amino-acid biosynthesis</keyword>
<keyword id="KW-0032">Aminotransferase</keyword>
<keyword id="KW-0963">Cytoplasm</keyword>
<keyword id="KW-0663">Pyridoxal phosphate</keyword>
<keyword id="KW-0664">Pyridoxine biosynthesis</keyword>
<keyword id="KW-0718">Serine biosynthesis</keyword>
<keyword id="KW-0808">Transferase</keyword>
<reference key="1">
    <citation type="submission" date="2009-07" db="EMBL/GenBank/DDBJ databases">
        <title>Complete sequence of Pectobacterium carotovorum subsp. carotovorum PC1.</title>
        <authorList>
            <consortium name="US DOE Joint Genome Institute"/>
            <person name="Lucas S."/>
            <person name="Copeland A."/>
            <person name="Lapidus A."/>
            <person name="Glavina del Rio T."/>
            <person name="Tice H."/>
            <person name="Bruce D."/>
            <person name="Goodwin L."/>
            <person name="Pitluck S."/>
            <person name="Munk A.C."/>
            <person name="Brettin T."/>
            <person name="Detter J.C."/>
            <person name="Han C."/>
            <person name="Tapia R."/>
            <person name="Larimer F."/>
            <person name="Land M."/>
            <person name="Hauser L."/>
            <person name="Kyrpides N."/>
            <person name="Mikhailova N."/>
            <person name="Balakrishnan V."/>
            <person name="Glasner J."/>
            <person name="Perna N.T."/>
        </authorList>
    </citation>
    <scope>NUCLEOTIDE SEQUENCE [LARGE SCALE GENOMIC DNA]</scope>
    <source>
        <strain>PC1</strain>
    </source>
</reference>
<accession>C6DF64</accession>
<gene>
    <name evidence="1" type="primary">serC</name>
    <name type="ordered locus">PC1_1732</name>
</gene>
<sequence>MTQIFNFSAGPAMLPVEVLRRAEQELCNWNGLGTSVMEISHRSKEFMQVAAESEQNLRDLLKIPSNYKVLFCHGGARAQFAAVPLNLLGERSTADYIDGGYWAHSAVNEAEKYCTPNVIDVKTRVDGLRGVKPMREWQLSDDAAFVHYCPNETIDGIAIEEEPDFGDKIVVADYSSSILSRRIDVSRYGVIYAGAQKNIGPAGLTLVIVRDDLLGKARRELPSILDYQILADNDSMFNTPPTFAWYLSGMVFKWLKEHGGLAEMEKRNQEKADLLYSAIDGNDFYRNDVAVANRSRMNVPFLLADAALDKVFLEESVAAGLHALKGHRVVGGMRASIYNAMPLEGVKALTEFMADFARRHG</sequence>
<comment type="function">
    <text evidence="1">Catalyzes the reversible conversion of 3-phosphohydroxypyruvate to phosphoserine and of 3-hydroxy-2-oxo-4-phosphonooxybutanoate to phosphohydroxythreonine.</text>
</comment>
<comment type="catalytic activity">
    <reaction evidence="1">
        <text>O-phospho-L-serine + 2-oxoglutarate = 3-phosphooxypyruvate + L-glutamate</text>
        <dbReference type="Rhea" id="RHEA:14329"/>
        <dbReference type="ChEBI" id="CHEBI:16810"/>
        <dbReference type="ChEBI" id="CHEBI:18110"/>
        <dbReference type="ChEBI" id="CHEBI:29985"/>
        <dbReference type="ChEBI" id="CHEBI:57524"/>
        <dbReference type="EC" id="2.6.1.52"/>
    </reaction>
</comment>
<comment type="catalytic activity">
    <reaction evidence="1">
        <text>4-(phosphooxy)-L-threonine + 2-oxoglutarate = (R)-3-hydroxy-2-oxo-4-phosphooxybutanoate + L-glutamate</text>
        <dbReference type="Rhea" id="RHEA:16573"/>
        <dbReference type="ChEBI" id="CHEBI:16810"/>
        <dbReference type="ChEBI" id="CHEBI:29985"/>
        <dbReference type="ChEBI" id="CHEBI:58452"/>
        <dbReference type="ChEBI" id="CHEBI:58538"/>
        <dbReference type="EC" id="2.6.1.52"/>
    </reaction>
</comment>
<comment type="cofactor">
    <cofactor evidence="1">
        <name>pyridoxal 5'-phosphate</name>
        <dbReference type="ChEBI" id="CHEBI:597326"/>
    </cofactor>
    <text evidence="1">Binds 1 pyridoxal phosphate per subunit.</text>
</comment>
<comment type="pathway">
    <text evidence="1">Amino-acid biosynthesis; L-serine biosynthesis; L-serine from 3-phospho-D-glycerate: step 2/3.</text>
</comment>
<comment type="pathway">
    <text evidence="1">Cofactor biosynthesis; pyridoxine 5'-phosphate biosynthesis; pyridoxine 5'-phosphate from D-erythrose 4-phosphate: step 3/5.</text>
</comment>
<comment type="subunit">
    <text evidence="1">Homodimer.</text>
</comment>
<comment type="subcellular location">
    <subcellularLocation>
        <location evidence="1">Cytoplasm</location>
    </subcellularLocation>
</comment>
<comment type="similarity">
    <text evidence="1">Belongs to the class-V pyridoxal-phosphate-dependent aminotransferase family. SerC subfamily.</text>
</comment>
<organism>
    <name type="scientific">Pectobacterium carotovorum subsp. carotovorum (strain PC1)</name>
    <dbReference type="NCBI Taxonomy" id="561230"/>
    <lineage>
        <taxon>Bacteria</taxon>
        <taxon>Pseudomonadati</taxon>
        <taxon>Pseudomonadota</taxon>
        <taxon>Gammaproteobacteria</taxon>
        <taxon>Enterobacterales</taxon>
        <taxon>Pectobacteriaceae</taxon>
        <taxon>Pectobacterium</taxon>
    </lineage>
</organism>